<keyword id="KW-0002">3D-structure</keyword>
<keyword id="KW-0007">Acetylation</keyword>
<keyword id="KW-0963">Cytoplasm</keyword>
<keyword id="KW-0324">Glycolysis</keyword>
<keyword id="KW-0456">Lyase</keyword>
<keyword id="KW-0460">Magnesium</keyword>
<keyword id="KW-0479">Metal-binding</keyword>
<proteinExistence type="evidence at protein level"/>
<sequence>SITKVFARTIFDSRGNPTVEVDLYTSKGLFRAAVPSGASTGVHEALEMRDGDKSKYHGKSVFNAVKNVNDVIVPEIIKSGLKVTQQKECDEFMCKLDGTENKSSLGANAILGVSLAICKAGAAELGIPLYRHIANLANYDEVILPVPAFNVINGGSHAGNKLAMQEFMILPTGATSFTEAMRMGTEVYHHLKAVIKARFGLDATAVGDEGGFAPNILNNKDALDLIQEAIKKAGYTGKIEIGMDVAASEFYKQNNIYDLDFKTANNDGSQKISGDQLRDMYMEFCKDFPIVSIEDPFDQDDWETWSKMTSGTTIQIVGDDLTVTNPKRITTAVEKKACKCLLLKVNQIGSVTESIDAHLLAKKNGWGTMVSHRSGETEDCFIADLVVGLCTGQIKTGAPCRSERLAKYNQILRIEEELGSGAKFAGKNFRAPS</sequence>
<reference evidence="5 6" key="1">
    <citation type="journal article" date="1995" name="Biochemistry">
        <title>X-ray structure and catalytic mechanism of lobster enolase.</title>
        <authorList>
            <person name="Duquerroy S."/>
            <person name="Camus C."/>
            <person name="Janin J."/>
        </authorList>
    </citation>
    <scope>NUCLEOTIDE SEQUENCE [MRNA]</scope>
    <scope>X-RAY CRYSTALLOGRAPHY (2.2 ANGSTROMS) IN COMPLEX WITH SUBSTRATE ANALOG AND MANGANESE IONS</scope>
    <scope>ACETYLATION AT SER-1</scope>
    <source>
        <tissue>Muscle</tissue>
    </source>
</reference>
<evidence type="ECO:0000250" key="1"/>
<evidence type="ECO:0000269" key="2">
    <source>
    </source>
</evidence>
<evidence type="ECO:0000305" key="3"/>
<evidence type="ECO:0000305" key="4">
    <source>
    </source>
</evidence>
<evidence type="ECO:0007744" key="5">
    <source>
        <dbReference type="PDB" id="1PDY"/>
    </source>
</evidence>
<evidence type="ECO:0007744" key="6">
    <source>
        <dbReference type="PDB" id="1PDZ"/>
    </source>
</evidence>
<evidence type="ECO:0007829" key="7">
    <source>
        <dbReference type="PDB" id="1PDY"/>
    </source>
</evidence>
<evidence type="ECO:0007829" key="8">
    <source>
        <dbReference type="PDB" id="1PDZ"/>
    </source>
</evidence>
<name>ENO_HOMGA</name>
<feature type="chain" id="PRO_0000134085" description="Enolase">
    <location>
        <begin position="1"/>
        <end position="433"/>
    </location>
</feature>
<feature type="active site" description="Proton donor" evidence="1">
    <location>
        <position position="209"/>
    </location>
</feature>
<feature type="active site" description="Proton acceptor" evidence="1">
    <location>
        <position position="344"/>
    </location>
</feature>
<feature type="binding site" evidence="4 6">
    <location>
        <position position="36"/>
    </location>
    <ligand>
        <name>(2R)-2-phosphoglycerate</name>
        <dbReference type="ChEBI" id="CHEBI:58289"/>
    </ligand>
</feature>
<feature type="binding site" evidence="4 6">
    <location>
        <position position="157"/>
    </location>
    <ligand>
        <name>(2R)-2-phosphoglycerate</name>
        <dbReference type="ChEBI" id="CHEBI:58289"/>
    </ligand>
</feature>
<feature type="binding site" evidence="2 6">
    <location>
        <position position="244"/>
    </location>
    <ligand>
        <name>Mn(2+)</name>
        <dbReference type="ChEBI" id="CHEBI:29035"/>
    </ligand>
</feature>
<feature type="binding site" evidence="2 6">
    <location>
        <position position="294"/>
    </location>
    <ligand>
        <name>Mn(2+)</name>
        <dbReference type="ChEBI" id="CHEBI:29035"/>
    </ligand>
</feature>
<feature type="binding site" evidence="2 6">
    <location>
        <position position="319"/>
    </location>
    <ligand>
        <name>Mn(2+)</name>
        <dbReference type="ChEBI" id="CHEBI:29035"/>
    </ligand>
</feature>
<feature type="binding site" evidence="4 6">
    <location>
        <position position="344"/>
    </location>
    <ligand>
        <name>(2R)-2-phosphoglycerate</name>
        <dbReference type="ChEBI" id="CHEBI:58289"/>
    </ligand>
</feature>
<feature type="binding site" evidence="4 6">
    <location>
        <position position="373"/>
    </location>
    <ligand>
        <name>(2R)-2-phosphoglycerate</name>
        <dbReference type="ChEBI" id="CHEBI:58289"/>
    </ligand>
</feature>
<feature type="binding site" evidence="4 6">
    <location>
        <position position="374"/>
    </location>
    <ligand>
        <name>(2R)-2-phosphoglycerate</name>
        <dbReference type="ChEBI" id="CHEBI:58289"/>
    </ligand>
</feature>
<feature type="modified residue" description="N-acetylserine" evidence="4">
    <location>
        <position position="1"/>
    </location>
</feature>
<feature type="strand" evidence="8">
    <location>
        <begin position="4"/>
        <end position="11"/>
    </location>
</feature>
<feature type="strand" evidence="8">
    <location>
        <begin position="17"/>
        <end position="25"/>
    </location>
</feature>
<feature type="strand" evidence="8">
    <location>
        <begin position="28"/>
        <end position="33"/>
    </location>
</feature>
<feature type="strand" evidence="8">
    <location>
        <begin position="38"/>
        <end position="40"/>
    </location>
</feature>
<feature type="strand" evidence="8">
    <location>
        <begin position="42"/>
        <end position="44"/>
    </location>
</feature>
<feature type="helix" evidence="8">
    <location>
        <begin position="56"/>
        <end position="58"/>
    </location>
</feature>
<feature type="helix" evidence="8">
    <location>
        <begin position="62"/>
        <end position="70"/>
    </location>
</feature>
<feature type="helix" evidence="8">
    <location>
        <begin position="72"/>
        <end position="79"/>
    </location>
</feature>
<feature type="helix" evidence="8">
    <location>
        <begin position="86"/>
        <end position="97"/>
    </location>
</feature>
<feature type="strand" evidence="8">
    <location>
        <begin position="99"/>
        <end position="102"/>
    </location>
</feature>
<feature type="turn" evidence="8">
    <location>
        <begin position="103"/>
        <end position="105"/>
    </location>
</feature>
<feature type="helix" evidence="8">
    <location>
        <begin position="107"/>
        <end position="124"/>
    </location>
</feature>
<feature type="helix" evidence="8">
    <location>
        <begin position="129"/>
        <end position="136"/>
    </location>
</feature>
<feature type="strand" evidence="8">
    <location>
        <begin position="149"/>
        <end position="153"/>
    </location>
</feature>
<feature type="strand" evidence="8">
    <location>
        <begin position="155"/>
        <end position="158"/>
    </location>
</feature>
<feature type="strand" evidence="8">
    <location>
        <begin position="166"/>
        <end position="170"/>
    </location>
</feature>
<feature type="helix" evidence="8">
    <location>
        <begin position="177"/>
        <end position="199"/>
    </location>
</feature>
<feature type="helix" evidence="8">
    <location>
        <begin position="201"/>
        <end position="204"/>
    </location>
</feature>
<feature type="helix" evidence="8">
    <location>
        <begin position="219"/>
        <end position="233"/>
    </location>
</feature>
<feature type="strand" evidence="8">
    <location>
        <begin position="239"/>
        <end position="244"/>
    </location>
</feature>
<feature type="turn" evidence="8">
    <location>
        <begin position="247"/>
        <end position="250"/>
    </location>
</feature>
<feature type="helix" evidence="8">
    <location>
        <begin position="259"/>
        <end position="261"/>
    </location>
</feature>
<feature type="strand" evidence="7">
    <location>
        <begin position="263"/>
        <end position="265"/>
    </location>
</feature>
<feature type="turn" evidence="8">
    <location>
        <begin position="267"/>
        <end position="270"/>
    </location>
</feature>
<feature type="helix" evidence="8">
    <location>
        <begin position="274"/>
        <end position="287"/>
    </location>
</feature>
<feature type="strand" evidence="8">
    <location>
        <begin position="290"/>
        <end position="294"/>
    </location>
</feature>
<feature type="helix" evidence="8">
    <location>
        <begin position="302"/>
        <end position="311"/>
    </location>
</feature>
<feature type="strand" evidence="8">
    <location>
        <begin position="313"/>
        <end position="319"/>
    </location>
</feature>
<feature type="turn" evidence="8">
    <location>
        <begin position="320"/>
        <end position="324"/>
    </location>
</feature>
<feature type="helix" evidence="8">
    <location>
        <begin position="326"/>
        <end position="334"/>
    </location>
</feature>
<feature type="strand" evidence="8">
    <location>
        <begin position="339"/>
        <end position="343"/>
    </location>
</feature>
<feature type="helix" evidence="8">
    <location>
        <begin position="345"/>
        <end position="348"/>
    </location>
</feature>
<feature type="helix" evidence="8">
    <location>
        <begin position="351"/>
        <end position="363"/>
    </location>
</feature>
<feature type="strand" evidence="8">
    <location>
        <begin position="367"/>
        <end position="371"/>
    </location>
</feature>
<feature type="helix" evidence="8">
    <location>
        <begin position="381"/>
        <end position="388"/>
    </location>
</feature>
<feature type="strand" evidence="8">
    <location>
        <begin position="393"/>
        <end position="395"/>
    </location>
</feature>
<feature type="helix" evidence="8">
    <location>
        <begin position="402"/>
        <end position="418"/>
    </location>
</feature>
<feature type="helix" evidence="8">
    <location>
        <begin position="419"/>
        <end position="421"/>
    </location>
</feature>
<feature type="helix" evidence="8">
    <location>
        <begin position="426"/>
        <end position="428"/>
    </location>
</feature>
<protein>
    <recommendedName>
        <fullName>Enolase</fullName>
        <ecNumber>4.2.1.11</ecNumber>
    </recommendedName>
    <alternativeName>
        <fullName>2-phospho-D-glycerate hydro-lyase</fullName>
    </alternativeName>
    <alternativeName>
        <fullName>2-phosphoglycerate dehydratase</fullName>
    </alternativeName>
</protein>
<comment type="catalytic activity">
    <reaction>
        <text>(2R)-2-phosphoglycerate = phosphoenolpyruvate + H2O</text>
        <dbReference type="Rhea" id="RHEA:10164"/>
        <dbReference type="ChEBI" id="CHEBI:15377"/>
        <dbReference type="ChEBI" id="CHEBI:58289"/>
        <dbReference type="ChEBI" id="CHEBI:58702"/>
        <dbReference type="EC" id="4.2.1.11"/>
    </reaction>
</comment>
<comment type="cofactor">
    <cofactor evidence="4">
        <name>Mg(2+)</name>
        <dbReference type="ChEBI" id="CHEBI:18420"/>
    </cofactor>
    <text evidence="2 4">Mg(2+) is required for catalysis and for stabilizing the dimer (Probable). Crystallized with Mn(2+) (PubMed:7547999).</text>
</comment>
<comment type="activity regulation">
    <text evidence="2">Inhibited by 2-phosphoglycolic acid (PubMed:7547999).</text>
</comment>
<comment type="pathway">
    <text>Carbohydrate degradation; glycolysis; pyruvate from D-glyceraldehyde 3-phosphate: step 4/5.</text>
</comment>
<comment type="subunit">
    <text evidence="2">Homodimer.</text>
</comment>
<comment type="subcellular location">
    <subcellularLocation>
        <location>Cytoplasm</location>
    </subcellularLocation>
</comment>
<comment type="similarity">
    <text evidence="3">Belongs to the enolase family.</text>
</comment>
<dbReference type="EC" id="4.2.1.11"/>
<dbReference type="PDB" id="1PDY">
    <property type="method" value="X-ray"/>
    <property type="resolution" value="2.40 A"/>
    <property type="chains" value="A=1-433"/>
</dbReference>
<dbReference type="PDB" id="1PDZ">
    <property type="method" value="X-ray"/>
    <property type="resolution" value="2.20 A"/>
    <property type="chains" value="A=1-433"/>
</dbReference>
<dbReference type="PDBsum" id="1PDY"/>
<dbReference type="PDBsum" id="1PDZ"/>
<dbReference type="SMR" id="P56252"/>
<dbReference type="iPTMnet" id="P56252"/>
<dbReference type="UniPathway" id="UPA00109">
    <property type="reaction ID" value="UER00187"/>
</dbReference>
<dbReference type="EvolutionaryTrace" id="P56252"/>
<dbReference type="GO" id="GO:0000015">
    <property type="term" value="C:phosphopyruvate hydratase complex"/>
    <property type="evidence" value="ECO:0007669"/>
    <property type="project" value="InterPro"/>
</dbReference>
<dbReference type="GO" id="GO:0000287">
    <property type="term" value="F:magnesium ion binding"/>
    <property type="evidence" value="ECO:0007669"/>
    <property type="project" value="InterPro"/>
</dbReference>
<dbReference type="GO" id="GO:0004634">
    <property type="term" value="F:phosphopyruvate hydratase activity"/>
    <property type="evidence" value="ECO:0007669"/>
    <property type="project" value="UniProtKB-EC"/>
</dbReference>
<dbReference type="GO" id="GO:0006096">
    <property type="term" value="P:glycolytic process"/>
    <property type="evidence" value="ECO:0007669"/>
    <property type="project" value="UniProtKB-UniPathway"/>
</dbReference>
<dbReference type="CDD" id="cd03313">
    <property type="entry name" value="enolase"/>
    <property type="match status" value="1"/>
</dbReference>
<dbReference type="FunFam" id="3.30.390.10:FF:000001">
    <property type="entry name" value="Enolase"/>
    <property type="match status" value="1"/>
</dbReference>
<dbReference type="FunFam" id="3.20.20.120:FF:000002">
    <property type="entry name" value="Enolase 1"/>
    <property type="match status" value="1"/>
</dbReference>
<dbReference type="Gene3D" id="3.20.20.120">
    <property type="entry name" value="Enolase-like C-terminal domain"/>
    <property type="match status" value="1"/>
</dbReference>
<dbReference type="Gene3D" id="3.30.390.10">
    <property type="entry name" value="Enolase-like, N-terminal domain"/>
    <property type="match status" value="1"/>
</dbReference>
<dbReference type="HAMAP" id="MF_00318">
    <property type="entry name" value="Enolase"/>
    <property type="match status" value="1"/>
</dbReference>
<dbReference type="InterPro" id="IPR000941">
    <property type="entry name" value="Enolase"/>
</dbReference>
<dbReference type="InterPro" id="IPR036849">
    <property type="entry name" value="Enolase-like_C_sf"/>
</dbReference>
<dbReference type="InterPro" id="IPR029017">
    <property type="entry name" value="Enolase-like_N"/>
</dbReference>
<dbReference type="InterPro" id="IPR020810">
    <property type="entry name" value="Enolase_C"/>
</dbReference>
<dbReference type="InterPro" id="IPR020809">
    <property type="entry name" value="Enolase_CS"/>
</dbReference>
<dbReference type="InterPro" id="IPR020811">
    <property type="entry name" value="Enolase_N"/>
</dbReference>
<dbReference type="NCBIfam" id="TIGR01060">
    <property type="entry name" value="eno"/>
    <property type="match status" value="1"/>
</dbReference>
<dbReference type="PANTHER" id="PTHR11902">
    <property type="entry name" value="ENOLASE"/>
    <property type="match status" value="1"/>
</dbReference>
<dbReference type="PANTHER" id="PTHR11902:SF1">
    <property type="entry name" value="ENOLASE"/>
    <property type="match status" value="1"/>
</dbReference>
<dbReference type="Pfam" id="PF00113">
    <property type="entry name" value="Enolase_C"/>
    <property type="match status" value="1"/>
</dbReference>
<dbReference type="Pfam" id="PF03952">
    <property type="entry name" value="Enolase_N"/>
    <property type="match status" value="1"/>
</dbReference>
<dbReference type="PIRSF" id="PIRSF001400">
    <property type="entry name" value="Enolase"/>
    <property type="match status" value="1"/>
</dbReference>
<dbReference type="PRINTS" id="PR00148">
    <property type="entry name" value="ENOLASE"/>
</dbReference>
<dbReference type="SFLD" id="SFLDF00002">
    <property type="entry name" value="enolase"/>
    <property type="match status" value="1"/>
</dbReference>
<dbReference type="SFLD" id="SFLDG00178">
    <property type="entry name" value="enolase"/>
    <property type="match status" value="1"/>
</dbReference>
<dbReference type="SMART" id="SM01192">
    <property type="entry name" value="Enolase_C"/>
    <property type="match status" value="1"/>
</dbReference>
<dbReference type="SMART" id="SM01193">
    <property type="entry name" value="Enolase_N"/>
    <property type="match status" value="1"/>
</dbReference>
<dbReference type="SUPFAM" id="SSF51604">
    <property type="entry name" value="Enolase C-terminal domain-like"/>
    <property type="match status" value="1"/>
</dbReference>
<dbReference type="SUPFAM" id="SSF54826">
    <property type="entry name" value="Enolase N-terminal domain-like"/>
    <property type="match status" value="1"/>
</dbReference>
<dbReference type="PROSITE" id="PS00164">
    <property type="entry name" value="ENOLASE"/>
    <property type="match status" value="1"/>
</dbReference>
<accession>P56252</accession>
<organism>
    <name type="scientific">Homarus gammarus</name>
    <name type="common">European lobster</name>
    <name type="synonym">Homarus vulgaris</name>
    <dbReference type="NCBI Taxonomy" id="6707"/>
    <lineage>
        <taxon>Eukaryota</taxon>
        <taxon>Metazoa</taxon>
        <taxon>Ecdysozoa</taxon>
        <taxon>Arthropoda</taxon>
        <taxon>Crustacea</taxon>
        <taxon>Multicrustacea</taxon>
        <taxon>Malacostraca</taxon>
        <taxon>Eumalacostraca</taxon>
        <taxon>Eucarida</taxon>
        <taxon>Decapoda</taxon>
        <taxon>Pleocyemata</taxon>
        <taxon>Astacidea</taxon>
        <taxon>Nephropoidea</taxon>
        <taxon>Nephropidae</taxon>
        <taxon>Homarus</taxon>
    </lineage>
</organism>